<feature type="chain" id="PRO_0000249605" description="N-acetylmuramic acid 6-phosphate etherase">
    <location>
        <begin position="1"/>
        <end position="294"/>
    </location>
</feature>
<feature type="domain" description="SIS" evidence="1">
    <location>
        <begin position="54"/>
        <end position="217"/>
    </location>
</feature>
<feature type="active site" description="Proton donor" evidence="1">
    <location>
        <position position="82"/>
    </location>
</feature>
<feature type="active site" evidence="1">
    <location>
        <position position="113"/>
    </location>
</feature>
<comment type="function">
    <text evidence="1">Specifically catalyzes the cleavage of the D-lactyl ether substituent of MurNAc 6-phosphate, producing GlcNAc 6-phosphate and D-lactate.</text>
</comment>
<comment type="catalytic activity">
    <reaction evidence="1">
        <text>N-acetyl-D-muramate 6-phosphate + H2O = N-acetyl-D-glucosamine 6-phosphate + (R)-lactate</text>
        <dbReference type="Rhea" id="RHEA:26410"/>
        <dbReference type="ChEBI" id="CHEBI:15377"/>
        <dbReference type="ChEBI" id="CHEBI:16004"/>
        <dbReference type="ChEBI" id="CHEBI:57513"/>
        <dbReference type="ChEBI" id="CHEBI:58722"/>
        <dbReference type="EC" id="4.2.1.126"/>
    </reaction>
</comment>
<comment type="pathway">
    <text evidence="1">Amino-sugar metabolism; N-acetylmuramate degradation.</text>
</comment>
<comment type="subunit">
    <text evidence="1">Homodimer.</text>
</comment>
<comment type="miscellaneous">
    <text evidence="1">A lyase-type mechanism (elimination/hydration) is suggested for the cleavage of the lactyl ether bond of MurNAc 6-phosphate, with the formation of an alpha,beta-unsaturated aldehyde intermediate with (E)-stereochemistry, followed by the syn addition of water to give product.</text>
</comment>
<comment type="similarity">
    <text evidence="1">Belongs to the GCKR-like family. MurNAc-6-P etherase subfamily.</text>
</comment>
<evidence type="ECO:0000255" key="1">
    <source>
        <dbReference type="HAMAP-Rule" id="MF_00068"/>
    </source>
</evidence>
<name>MURQ_BACCR</name>
<accession>Q81HH1</accession>
<proteinExistence type="inferred from homology"/>
<protein>
    <recommendedName>
        <fullName evidence="1">N-acetylmuramic acid 6-phosphate etherase</fullName>
        <shortName evidence="1">MurNAc-6-P etherase</shortName>
        <ecNumber evidence="1">4.2.1.126</ecNumber>
    </recommendedName>
    <alternativeName>
        <fullName evidence="1">N-acetylmuramic acid 6-phosphate hydrolase</fullName>
    </alternativeName>
    <alternativeName>
        <fullName evidence="1">N-acetylmuramic acid 6-phosphate lyase</fullName>
    </alternativeName>
</protein>
<organism>
    <name type="scientific">Bacillus cereus (strain ATCC 14579 / DSM 31 / CCUG 7414 / JCM 2152 / NBRC 15305 / NCIMB 9373 / NCTC 2599 / NRRL B-3711)</name>
    <dbReference type="NCBI Taxonomy" id="226900"/>
    <lineage>
        <taxon>Bacteria</taxon>
        <taxon>Bacillati</taxon>
        <taxon>Bacillota</taxon>
        <taxon>Bacilli</taxon>
        <taxon>Bacillales</taxon>
        <taxon>Bacillaceae</taxon>
        <taxon>Bacillus</taxon>
        <taxon>Bacillus cereus group</taxon>
    </lineage>
</organism>
<dbReference type="EC" id="4.2.1.126" evidence="1"/>
<dbReference type="EMBL" id="AE016877">
    <property type="protein sequence ID" value="AAP07828.1"/>
    <property type="molecule type" value="Genomic_DNA"/>
</dbReference>
<dbReference type="RefSeq" id="NP_830627.1">
    <property type="nucleotide sequence ID" value="NC_004722.1"/>
</dbReference>
<dbReference type="RefSeq" id="WP_000892350.1">
    <property type="nucleotide sequence ID" value="NZ_CP138336.1"/>
</dbReference>
<dbReference type="SMR" id="Q81HH1"/>
<dbReference type="STRING" id="226900.BC_0841"/>
<dbReference type="KEGG" id="bce:BC0841"/>
<dbReference type="PATRIC" id="fig|226900.8.peg.785"/>
<dbReference type="HOGENOM" id="CLU_049049_1_1_9"/>
<dbReference type="OrthoDB" id="9813395at2"/>
<dbReference type="UniPathway" id="UPA00342"/>
<dbReference type="Proteomes" id="UP000001417">
    <property type="component" value="Chromosome"/>
</dbReference>
<dbReference type="GO" id="GO:0097367">
    <property type="term" value="F:carbohydrate derivative binding"/>
    <property type="evidence" value="ECO:0007669"/>
    <property type="project" value="InterPro"/>
</dbReference>
<dbReference type="GO" id="GO:0016835">
    <property type="term" value="F:carbon-oxygen lyase activity"/>
    <property type="evidence" value="ECO:0000318"/>
    <property type="project" value="GO_Central"/>
</dbReference>
<dbReference type="GO" id="GO:0016803">
    <property type="term" value="F:ether hydrolase activity"/>
    <property type="evidence" value="ECO:0000318"/>
    <property type="project" value="GO_Central"/>
</dbReference>
<dbReference type="GO" id="GO:0046348">
    <property type="term" value="P:amino sugar catabolic process"/>
    <property type="evidence" value="ECO:0000318"/>
    <property type="project" value="GO_Central"/>
</dbReference>
<dbReference type="GO" id="GO:0097173">
    <property type="term" value="P:N-acetylmuramic acid catabolic process"/>
    <property type="evidence" value="ECO:0007669"/>
    <property type="project" value="UniProtKB-UniPathway"/>
</dbReference>
<dbReference type="GO" id="GO:0009254">
    <property type="term" value="P:peptidoglycan turnover"/>
    <property type="evidence" value="ECO:0000318"/>
    <property type="project" value="GO_Central"/>
</dbReference>
<dbReference type="CDD" id="cd05007">
    <property type="entry name" value="SIS_Etherase"/>
    <property type="match status" value="1"/>
</dbReference>
<dbReference type="FunFam" id="1.10.8.1080:FF:000001">
    <property type="entry name" value="N-acetylmuramic acid 6-phosphate etherase"/>
    <property type="match status" value="1"/>
</dbReference>
<dbReference type="FunFam" id="3.40.50.10490:FF:000014">
    <property type="entry name" value="N-acetylmuramic acid 6-phosphate etherase"/>
    <property type="match status" value="1"/>
</dbReference>
<dbReference type="Gene3D" id="1.10.8.1080">
    <property type="match status" value="1"/>
</dbReference>
<dbReference type="Gene3D" id="3.40.50.10490">
    <property type="entry name" value="Glucose-6-phosphate isomerase like protein, domain 1"/>
    <property type="match status" value="1"/>
</dbReference>
<dbReference type="HAMAP" id="MF_00068">
    <property type="entry name" value="MurQ"/>
    <property type="match status" value="1"/>
</dbReference>
<dbReference type="InterPro" id="IPR005488">
    <property type="entry name" value="Etherase_MurQ"/>
</dbReference>
<dbReference type="InterPro" id="IPR005486">
    <property type="entry name" value="Glucokinase_regulatory_CS"/>
</dbReference>
<dbReference type="InterPro" id="IPR040190">
    <property type="entry name" value="MURQ/GCKR"/>
</dbReference>
<dbReference type="InterPro" id="IPR001347">
    <property type="entry name" value="SIS_dom"/>
</dbReference>
<dbReference type="InterPro" id="IPR046348">
    <property type="entry name" value="SIS_dom_sf"/>
</dbReference>
<dbReference type="NCBIfam" id="TIGR00274">
    <property type="entry name" value="N-acetylmuramic acid 6-phosphate etherase"/>
    <property type="match status" value="1"/>
</dbReference>
<dbReference type="NCBIfam" id="NF003915">
    <property type="entry name" value="PRK05441.1"/>
    <property type="match status" value="1"/>
</dbReference>
<dbReference type="NCBIfam" id="NF009222">
    <property type="entry name" value="PRK12570.1"/>
    <property type="match status" value="1"/>
</dbReference>
<dbReference type="PANTHER" id="PTHR10088">
    <property type="entry name" value="GLUCOKINASE REGULATORY PROTEIN"/>
    <property type="match status" value="1"/>
</dbReference>
<dbReference type="PANTHER" id="PTHR10088:SF4">
    <property type="entry name" value="GLUCOKINASE REGULATORY PROTEIN"/>
    <property type="match status" value="1"/>
</dbReference>
<dbReference type="Pfam" id="PF22645">
    <property type="entry name" value="GKRP_SIS_N"/>
    <property type="match status" value="1"/>
</dbReference>
<dbReference type="SUPFAM" id="SSF53697">
    <property type="entry name" value="SIS domain"/>
    <property type="match status" value="1"/>
</dbReference>
<dbReference type="PROSITE" id="PS01272">
    <property type="entry name" value="GCKR"/>
    <property type="match status" value="1"/>
</dbReference>
<dbReference type="PROSITE" id="PS51464">
    <property type="entry name" value="SIS"/>
    <property type="match status" value="1"/>
</dbReference>
<gene>
    <name evidence="1" type="primary">murQ</name>
    <name type="ordered locus">BC_0841</name>
</gene>
<sequence length="294" mass="31950">MLENLSTEHRNEKTMNLDEMSIKEVLQSMNEEDRTVALAVEKEIEQIEKVVQTVIKSFEEEGRLIYIGAGTSGRLGILDAVECPPTFGTDDKMVQGFIAGGLKAFTKAVEGAEDREELAEEDLKSIGLNEKDTVIGIAASGRTPYVIGGLKYAQSVGASTASISCNKNAEISKYANLNVEVETGAEILTGSTRLKAGTAQKLVLNMISTASMIGVGKVYKNLMVDVQSTNEKLVERSKRIIVEATGASYEVAAEYYEKAERNVKAAIVMVLLQCEYGEALEKLKYAKGFVKKAL</sequence>
<keyword id="KW-0119">Carbohydrate metabolism</keyword>
<keyword id="KW-0456">Lyase</keyword>
<keyword id="KW-1185">Reference proteome</keyword>
<reference key="1">
    <citation type="journal article" date="2003" name="Nature">
        <title>Genome sequence of Bacillus cereus and comparative analysis with Bacillus anthracis.</title>
        <authorList>
            <person name="Ivanova N."/>
            <person name="Sorokin A."/>
            <person name="Anderson I."/>
            <person name="Galleron N."/>
            <person name="Candelon B."/>
            <person name="Kapatral V."/>
            <person name="Bhattacharyya A."/>
            <person name="Reznik G."/>
            <person name="Mikhailova N."/>
            <person name="Lapidus A."/>
            <person name="Chu L."/>
            <person name="Mazur M."/>
            <person name="Goltsman E."/>
            <person name="Larsen N."/>
            <person name="D'Souza M."/>
            <person name="Walunas T."/>
            <person name="Grechkin Y."/>
            <person name="Pusch G."/>
            <person name="Haselkorn R."/>
            <person name="Fonstein M."/>
            <person name="Ehrlich S.D."/>
            <person name="Overbeek R."/>
            <person name="Kyrpides N.C."/>
        </authorList>
    </citation>
    <scope>NUCLEOTIDE SEQUENCE [LARGE SCALE GENOMIC DNA]</scope>
    <source>
        <strain>ATCC 14579 / DSM 31 / CCUG 7414 / JCM 2152 / NBRC 15305 / NCIMB 9373 / NCTC 2599 / NRRL B-3711</strain>
    </source>
</reference>